<organism>
    <name type="scientific">Xanthomonas axonopodis pv. citri (strain 306)</name>
    <dbReference type="NCBI Taxonomy" id="190486"/>
    <lineage>
        <taxon>Bacteria</taxon>
        <taxon>Pseudomonadati</taxon>
        <taxon>Pseudomonadota</taxon>
        <taxon>Gammaproteobacteria</taxon>
        <taxon>Lysobacterales</taxon>
        <taxon>Lysobacteraceae</taxon>
        <taxon>Xanthomonas</taxon>
    </lineage>
</organism>
<keyword id="KW-0414">Isoprene biosynthesis</keyword>
<keyword id="KW-0456">Lyase</keyword>
<keyword id="KW-0479">Metal-binding</keyword>
<proteinExistence type="inferred from homology"/>
<comment type="function">
    <text evidence="1">Involved in the biosynthesis of isopentenyl diphosphate (IPP) and dimethylallyl diphosphate (DMAPP), two major building blocks of isoprenoid compounds. Catalyzes the conversion of 4-diphosphocytidyl-2-C-methyl-D-erythritol 2-phosphate (CDP-ME2P) to 2-C-methyl-D-erythritol 2,4-cyclodiphosphate (ME-CPP) with a corresponding release of cytidine 5-monophosphate (CMP).</text>
</comment>
<comment type="catalytic activity">
    <reaction evidence="1">
        <text>4-CDP-2-C-methyl-D-erythritol 2-phosphate = 2-C-methyl-D-erythritol 2,4-cyclic diphosphate + CMP</text>
        <dbReference type="Rhea" id="RHEA:23864"/>
        <dbReference type="ChEBI" id="CHEBI:57919"/>
        <dbReference type="ChEBI" id="CHEBI:58483"/>
        <dbReference type="ChEBI" id="CHEBI:60377"/>
        <dbReference type="EC" id="4.6.1.12"/>
    </reaction>
</comment>
<comment type="cofactor">
    <cofactor evidence="1">
        <name>a divalent metal cation</name>
        <dbReference type="ChEBI" id="CHEBI:60240"/>
    </cofactor>
    <text evidence="1">Binds 1 divalent metal cation per subunit.</text>
</comment>
<comment type="pathway">
    <text evidence="1">Isoprenoid biosynthesis; isopentenyl diphosphate biosynthesis via DXP pathway; isopentenyl diphosphate from 1-deoxy-D-xylulose 5-phosphate: step 4/6.</text>
</comment>
<comment type="subunit">
    <text evidence="1">Homotrimer.</text>
</comment>
<comment type="similarity">
    <text evidence="1">Belongs to the IspF family.</text>
</comment>
<reference key="1">
    <citation type="journal article" date="2002" name="Nature">
        <title>Comparison of the genomes of two Xanthomonas pathogens with differing host specificities.</title>
        <authorList>
            <person name="da Silva A.C.R."/>
            <person name="Ferro J.A."/>
            <person name="Reinach F.C."/>
            <person name="Farah C.S."/>
            <person name="Furlan L.R."/>
            <person name="Quaggio R.B."/>
            <person name="Monteiro-Vitorello C.B."/>
            <person name="Van Sluys M.A."/>
            <person name="Almeida N.F. Jr."/>
            <person name="Alves L.M.C."/>
            <person name="do Amaral A.M."/>
            <person name="Bertolini M.C."/>
            <person name="Camargo L.E.A."/>
            <person name="Camarotte G."/>
            <person name="Cannavan F."/>
            <person name="Cardozo J."/>
            <person name="Chambergo F."/>
            <person name="Ciapina L.P."/>
            <person name="Cicarelli R.M.B."/>
            <person name="Coutinho L.L."/>
            <person name="Cursino-Santos J.R."/>
            <person name="El-Dorry H."/>
            <person name="Faria J.B."/>
            <person name="Ferreira A.J.S."/>
            <person name="Ferreira R.C.C."/>
            <person name="Ferro M.I.T."/>
            <person name="Formighieri E.F."/>
            <person name="Franco M.C."/>
            <person name="Greggio C.C."/>
            <person name="Gruber A."/>
            <person name="Katsuyama A.M."/>
            <person name="Kishi L.T."/>
            <person name="Leite R.P."/>
            <person name="Lemos E.G.M."/>
            <person name="Lemos M.V.F."/>
            <person name="Locali E.C."/>
            <person name="Machado M.A."/>
            <person name="Madeira A.M.B.N."/>
            <person name="Martinez-Rossi N.M."/>
            <person name="Martins E.C."/>
            <person name="Meidanis J."/>
            <person name="Menck C.F.M."/>
            <person name="Miyaki C.Y."/>
            <person name="Moon D.H."/>
            <person name="Moreira L.M."/>
            <person name="Novo M.T.M."/>
            <person name="Okura V.K."/>
            <person name="Oliveira M.C."/>
            <person name="Oliveira V.R."/>
            <person name="Pereira H.A."/>
            <person name="Rossi A."/>
            <person name="Sena J.A.D."/>
            <person name="Silva C."/>
            <person name="de Souza R.F."/>
            <person name="Spinola L.A.F."/>
            <person name="Takita M.A."/>
            <person name="Tamura R.E."/>
            <person name="Teixeira E.C."/>
            <person name="Tezza R.I.D."/>
            <person name="Trindade dos Santos M."/>
            <person name="Truffi D."/>
            <person name="Tsai S.M."/>
            <person name="White F.F."/>
            <person name="Setubal J.C."/>
            <person name="Kitajima J.P."/>
        </authorList>
    </citation>
    <scope>NUCLEOTIDE SEQUENCE [LARGE SCALE GENOMIC DNA]</scope>
    <source>
        <strain>306</strain>
    </source>
</reference>
<evidence type="ECO:0000255" key="1">
    <source>
        <dbReference type="HAMAP-Rule" id="MF_00107"/>
    </source>
</evidence>
<dbReference type="EC" id="4.6.1.12" evidence="1"/>
<dbReference type="EMBL" id="AE008923">
    <property type="protein sequence ID" value="AAM36589.1"/>
    <property type="molecule type" value="Genomic_DNA"/>
</dbReference>
<dbReference type="RefSeq" id="WP_003481833.1">
    <property type="nucleotide sequence ID" value="NC_003919.1"/>
</dbReference>
<dbReference type="SMR" id="Q8PLR7"/>
<dbReference type="GeneID" id="66910872"/>
<dbReference type="KEGG" id="xac:XAC1722"/>
<dbReference type="eggNOG" id="COG0245">
    <property type="taxonomic scope" value="Bacteria"/>
</dbReference>
<dbReference type="HOGENOM" id="CLU_084630_2_0_6"/>
<dbReference type="UniPathway" id="UPA00056">
    <property type="reaction ID" value="UER00095"/>
</dbReference>
<dbReference type="PHI-base" id="PHI:4145"/>
<dbReference type="Proteomes" id="UP000000576">
    <property type="component" value="Chromosome"/>
</dbReference>
<dbReference type="GO" id="GO:0008685">
    <property type="term" value="F:2-C-methyl-D-erythritol 2,4-cyclodiphosphate synthase activity"/>
    <property type="evidence" value="ECO:0007669"/>
    <property type="project" value="UniProtKB-UniRule"/>
</dbReference>
<dbReference type="GO" id="GO:0046872">
    <property type="term" value="F:metal ion binding"/>
    <property type="evidence" value="ECO:0007669"/>
    <property type="project" value="UniProtKB-KW"/>
</dbReference>
<dbReference type="GO" id="GO:0019288">
    <property type="term" value="P:isopentenyl diphosphate biosynthetic process, methylerythritol 4-phosphate pathway"/>
    <property type="evidence" value="ECO:0007669"/>
    <property type="project" value="UniProtKB-UniRule"/>
</dbReference>
<dbReference type="GO" id="GO:0016114">
    <property type="term" value="P:terpenoid biosynthetic process"/>
    <property type="evidence" value="ECO:0007669"/>
    <property type="project" value="InterPro"/>
</dbReference>
<dbReference type="CDD" id="cd00554">
    <property type="entry name" value="MECDP_synthase"/>
    <property type="match status" value="1"/>
</dbReference>
<dbReference type="FunFam" id="3.30.1330.50:FF:000001">
    <property type="entry name" value="2-C-methyl-D-erythritol 2,4-cyclodiphosphate synthase"/>
    <property type="match status" value="1"/>
</dbReference>
<dbReference type="Gene3D" id="3.30.1330.50">
    <property type="entry name" value="2-C-methyl-D-erythritol 2,4-cyclodiphosphate synthase"/>
    <property type="match status" value="1"/>
</dbReference>
<dbReference type="HAMAP" id="MF_00107">
    <property type="entry name" value="IspF"/>
    <property type="match status" value="1"/>
</dbReference>
<dbReference type="InterPro" id="IPR003526">
    <property type="entry name" value="MECDP_synthase"/>
</dbReference>
<dbReference type="InterPro" id="IPR020555">
    <property type="entry name" value="MECDP_synthase_CS"/>
</dbReference>
<dbReference type="InterPro" id="IPR036571">
    <property type="entry name" value="MECDP_synthase_sf"/>
</dbReference>
<dbReference type="NCBIfam" id="TIGR00151">
    <property type="entry name" value="ispF"/>
    <property type="match status" value="1"/>
</dbReference>
<dbReference type="PANTHER" id="PTHR43181">
    <property type="entry name" value="2-C-METHYL-D-ERYTHRITOL 2,4-CYCLODIPHOSPHATE SYNTHASE, CHLOROPLASTIC"/>
    <property type="match status" value="1"/>
</dbReference>
<dbReference type="PANTHER" id="PTHR43181:SF1">
    <property type="entry name" value="2-C-METHYL-D-ERYTHRITOL 2,4-CYCLODIPHOSPHATE SYNTHASE, CHLOROPLASTIC"/>
    <property type="match status" value="1"/>
</dbReference>
<dbReference type="Pfam" id="PF02542">
    <property type="entry name" value="YgbB"/>
    <property type="match status" value="1"/>
</dbReference>
<dbReference type="SUPFAM" id="SSF69765">
    <property type="entry name" value="IpsF-like"/>
    <property type="match status" value="1"/>
</dbReference>
<dbReference type="PROSITE" id="PS01350">
    <property type="entry name" value="ISPF"/>
    <property type="match status" value="1"/>
</dbReference>
<gene>
    <name evidence="1" type="primary">ispF</name>
    <name type="ordered locus">XAC1722</name>
</gene>
<accession>Q8PLR7</accession>
<name>ISPF_XANAC</name>
<sequence>MSFNFRIGQGYDVHAFGPGDHVMLGGVRVAHSHGVLAHSDGDVVLHALCDAMLGALALGDIGRHFPPSDARWKDADSAQFLQHCDGLLRERGWRVGNADITVICERPKVGPHAVAMRERIADLLAIELDAVSVKATTSEQLGFTGRGEGIAAQAAVLLGRIAAPHQ</sequence>
<protein>
    <recommendedName>
        <fullName evidence="1">2-C-methyl-D-erythritol 2,4-cyclodiphosphate synthase</fullName>
        <shortName evidence="1">MECDP-synthase</shortName>
        <shortName evidence="1">MECPP-synthase</shortName>
        <shortName evidence="1">MECPS</shortName>
        <ecNumber evidence="1">4.6.1.12</ecNumber>
    </recommendedName>
</protein>
<feature type="chain" id="PRO_0000189519" description="2-C-methyl-D-erythritol 2,4-cyclodiphosphate synthase">
    <location>
        <begin position="1"/>
        <end position="166"/>
    </location>
</feature>
<feature type="binding site" evidence="1">
    <location>
        <begin position="12"/>
        <end position="14"/>
    </location>
    <ligand>
        <name>4-CDP-2-C-methyl-D-erythritol 2-phosphate</name>
        <dbReference type="ChEBI" id="CHEBI:57919"/>
    </ligand>
</feature>
<feature type="binding site" evidence="1">
    <location>
        <position position="12"/>
    </location>
    <ligand>
        <name>a divalent metal cation</name>
        <dbReference type="ChEBI" id="CHEBI:60240"/>
    </ligand>
</feature>
<feature type="binding site" evidence="1">
    <location>
        <position position="14"/>
    </location>
    <ligand>
        <name>a divalent metal cation</name>
        <dbReference type="ChEBI" id="CHEBI:60240"/>
    </ligand>
</feature>
<feature type="binding site" evidence="1">
    <location>
        <begin position="38"/>
        <end position="39"/>
    </location>
    <ligand>
        <name>4-CDP-2-C-methyl-D-erythritol 2-phosphate</name>
        <dbReference type="ChEBI" id="CHEBI:57919"/>
    </ligand>
</feature>
<feature type="binding site" evidence="1">
    <location>
        <position position="46"/>
    </location>
    <ligand>
        <name>a divalent metal cation</name>
        <dbReference type="ChEBI" id="CHEBI:60240"/>
    </ligand>
</feature>
<feature type="binding site" evidence="1">
    <location>
        <begin position="60"/>
        <end position="62"/>
    </location>
    <ligand>
        <name>4-CDP-2-C-methyl-D-erythritol 2-phosphate</name>
        <dbReference type="ChEBI" id="CHEBI:57919"/>
    </ligand>
</feature>
<feature type="binding site" evidence="1">
    <location>
        <begin position="136"/>
        <end position="139"/>
    </location>
    <ligand>
        <name>4-CDP-2-C-methyl-D-erythritol 2-phosphate</name>
        <dbReference type="ChEBI" id="CHEBI:57919"/>
    </ligand>
</feature>
<feature type="binding site" evidence="1">
    <location>
        <position position="143"/>
    </location>
    <ligand>
        <name>4-CDP-2-C-methyl-D-erythritol 2-phosphate</name>
        <dbReference type="ChEBI" id="CHEBI:57919"/>
    </ligand>
</feature>
<feature type="binding site" evidence="1">
    <location>
        <position position="146"/>
    </location>
    <ligand>
        <name>4-CDP-2-C-methyl-D-erythritol 2-phosphate</name>
        <dbReference type="ChEBI" id="CHEBI:57919"/>
    </ligand>
</feature>
<feature type="site" description="Transition state stabilizer" evidence="1">
    <location>
        <position position="38"/>
    </location>
</feature>
<feature type="site" description="Transition state stabilizer" evidence="1">
    <location>
        <position position="137"/>
    </location>
</feature>